<organism>
    <name type="scientific">Vibrio cholerae serotype O1 (strain ATCC 39315 / El Tor Inaba N16961)</name>
    <dbReference type="NCBI Taxonomy" id="243277"/>
    <lineage>
        <taxon>Bacteria</taxon>
        <taxon>Pseudomonadati</taxon>
        <taxon>Pseudomonadota</taxon>
        <taxon>Gammaproteobacteria</taxon>
        <taxon>Vibrionales</taxon>
        <taxon>Vibrionaceae</taxon>
        <taxon>Vibrio</taxon>
    </lineage>
</organism>
<reference key="1">
    <citation type="journal article" date="2000" name="Nature">
        <title>DNA sequence of both chromosomes of the cholera pathogen Vibrio cholerae.</title>
        <authorList>
            <person name="Heidelberg J.F."/>
            <person name="Eisen J.A."/>
            <person name="Nelson W.C."/>
            <person name="Clayton R.A."/>
            <person name="Gwinn M.L."/>
            <person name="Dodson R.J."/>
            <person name="Haft D.H."/>
            <person name="Hickey E.K."/>
            <person name="Peterson J.D."/>
            <person name="Umayam L.A."/>
            <person name="Gill S.R."/>
            <person name="Nelson K.E."/>
            <person name="Read T.D."/>
            <person name="Tettelin H."/>
            <person name="Richardson D.L."/>
            <person name="Ermolaeva M.D."/>
            <person name="Vamathevan J.J."/>
            <person name="Bass S."/>
            <person name="Qin H."/>
            <person name="Dragoi I."/>
            <person name="Sellers P."/>
            <person name="McDonald L.A."/>
            <person name="Utterback T.R."/>
            <person name="Fleischmann R.D."/>
            <person name="Nierman W.C."/>
            <person name="White O."/>
            <person name="Salzberg S.L."/>
            <person name="Smith H.O."/>
            <person name="Colwell R.R."/>
            <person name="Mekalanos J.J."/>
            <person name="Venter J.C."/>
            <person name="Fraser C.M."/>
        </authorList>
    </citation>
    <scope>NUCLEOTIDE SEQUENCE [LARGE SCALE GENOMIC DNA]</scope>
    <source>
        <strain>ATCC 39315 / El Tor Inaba N16961</strain>
    </source>
</reference>
<name>PROA_VIBCH</name>
<evidence type="ECO:0000255" key="1">
    <source>
        <dbReference type="HAMAP-Rule" id="MF_00412"/>
    </source>
</evidence>
<evidence type="ECO:0000305" key="2"/>
<accession>Q9KPT9</accession>
<feature type="chain" id="PRO_0000189807" description="Gamma-glutamyl phosphate reductase">
    <location>
        <begin position="1"/>
        <end position="416"/>
    </location>
</feature>
<dbReference type="EC" id="1.2.1.41" evidence="1"/>
<dbReference type="EMBL" id="AE003852">
    <property type="protein sequence ID" value="AAF95417.1"/>
    <property type="status" value="ALT_INIT"/>
    <property type="molecule type" value="Genomic_DNA"/>
</dbReference>
<dbReference type="PIR" id="E82095">
    <property type="entry name" value="E82095"/>
</dbReference>
<dbReference type="RefSeq" id="NP_231904.1">
    <property type="nucleotide sequence ID" value="NC_002505.1"/>
</dbReference>
<dbReference type="RefSeq" id="WP_000366574.1">
    <property type="nucleotide sequence ID" value="NZ_LT906614.1"/>
</dbReference>
<dbReference type="SMR" id="Q9KPT9"/>
<dbReference type="STRING" id="243277.VC_2273"/>
<dbReference type="DNASU" id="2613195"/>
<dbReference type="EnsemblBacteria" id="AAF95417">
    <property type="protein sequence ID" value="AAF95417"/>
    <property type="gene ID" value="VC_2273"/>
</dbReference>
<dbReference type="KEGG" id="vch:VC_2273"/>
<dbReference type="PATRIC" id="fig|243277.26.peg.2168"/>
<dbReference type="eggNOG" id="COG0014">
    <property type="taxonomic scope" value="Bacteria"/>
</dbReference>
<dbReference type="HOGENOM" id="CLU_030231_0_0_6"/>
<dbReference type="UniPathway" id="UPA00098">
    <property type="reaction ID" value="UER00360"/>
</dbReference>
<dbReference type="Proteomes" id="UP000000584">
    <property type="component" value="Chromosome 1"/>
</dbReference>
<dbReference type="GO" id="GO:0005737">
    <property type="term" value="C:cytoplasm"/>
    <property type="evidence" value="ECO:0007669"/>
    <property type="project" value="UniProtKB-SubCell"/>
</dbReference>
<dbReference type="GO" id="GO:0004350">
    <property type="term" value="F:glutamate-5-semialdehyde dehydrogenase activity"/>
    <property type="evidence" value="ECO:0000318"/>
    <property type="project" value="GO_Central"/>
</dbReference>
<dbReference type="GO" id="GO:0050661">
    <property type="term" value="F:NADP binding"/>
    <property type="evidence" value="ECO:0007669"/>
    <property type="project" value="InterPro"/>
</dbReference>
<dbReference type="GO" id="GO:0055129">
    <property type="term" value="P:L-proline biosynthetic process"/>
    <property type="evidence" value="ECO:0007669"/>
    <property type="project" value="UniProtKB-UniRule"/>
</dbReference>
<dbReference type="CDD" id="cd07079">
    <property type="entry name" value="ALDH_F18-19_ProA-GPR"/>
    <property type="match status" value="1"/>
</dbReference>
<dbReference type="FunFam" id="3.40.309.10:FF:000028">
    <property type="entry name" value="Gamma-glutamyl phosphate reductase"/>
    <property type="match status" value="1"/>
</dbReference>
<dbReference type="Gene3D" id="3.40.605.10">
    <property type="entry name" value="Aldehyde Dehydrogenase, Chain A, domain 1"/>
    <property type="match status" value="1"/>
</dbReference>
<dbReference type="Gene3D" id="3.40.309.10">
    <property type="entry name" value="Aldehyde Dehydrogenase, Chain A, domain 2"/>
    <property type="match status" value="1"/>
</dbReference>
<dbReference type="HAMAP" id="MF_00412">
    <property type="entry name" value="ProA"/>
    <property type="match status" value="1"/>
</dbReference>
<dbReference type="InterPro" id="IPR016161">
    <property type="entry name" value="Ald_DH/histidinol_DH"/>
</dbReference>
<dbReference type="InterPro" id="IPR016163">
    <property type="entry name" value="Ald_DH_C"/>
</dbReference>
<dbReference type="InterPro" id="IPR016162">
    <property type="entry name" value="Ald_DH_N"/>
</dbReference>
<dbReference type="InterPro" id="IPR015590">
    <property type="entry name" value="Aldehyde_DH_dom"/>
</dbReference>
<dbReference type="InterPro" id="IPR020593">
    <property type="entry name" value="G-glutamylP_reductase_CS"/>
</dbReference>
<dbReference type="InterPro" id="IPR012134">
    <property type="entry name" value="Glu-5-SA_DH"/>
</dbReference>
<dbReference type="InterPro" id="IPR000965">
    <property type="entry name" value="GPR_dom"/>
</dbReference>
<dbReference type="NCBIfam" id="NF001221">
    <property type="entry name" value="PRK00197.1"/>
    <property type="match status" value="1"/>
</dbReference>
<dbReference type="NCBIfam" id="TIGR00407">
    <property type="entry name" value="proA"/>
    <property type="match status" value="1"/>
</dbReference>
<dbReference type="PANTHER" id="PTHR11063:SF8">
    <property type="entry name" value="DELTA-1-PYRROLINE-5-CARBOXYLATE SYNTHASE"/>
    <property type="match status" value="1"/>
</dbReference>
<dbReference type="PANTHER" id="PTHR11063">
    <property type="entry name" value="GLUTAMATE SEMIALDEHYDE DEHYDROGENASE"/>
    <property type="match status" value="1"/>
</dbReference>
<dbReference type="Pfam" id="PF00171">
    <property type="entry name" value="Aldedh"/>
    <property type="match status" value="1"/>
</dbReference>
<dbReference type="PIRSF" id="PIRSF000151">
    <property type="entry name" value="GPR"/>
    <property type="match status" value="1"/>
</dbReference>
<dbReference type="SUPFAM" id="SSF53720">
    <property type="entry name" value="ALDH-like"/>
    <property type="match status" value="1"/>
</dbReference>
<dbReference type="PROSITE" id="PS01223">
    <property type="entry name" value="PROA"/>
    <property type="match status" value="1"/>
</dbReference>
<keyword id="KW-0028">Amino-acid biosynthesis</keyword>
<keyword id="KW-0963">Cytoplasm</keyword>
<keyword id="KW-0521">NADP</keyword>
<keyword id="KW-0560">Oxidoreductase</keyword>
<keyword id="KW-0641">Proline biosynthesis</keyword>
<keyword id="KW-1185">Reference proteome</keyword>
<protein>
    <recommendedName>
        <fullName evidence="1">Gamma-glutamyl phosphate reductase</fullName>
        <shortName evidence="1">GPR</shortName>
        <ecNumber evidence="1">1.2.1.41</ecNumber>
    </recommendedName>
    <alternativeName>
        <fullName evidence="1">Glutamate-5-semialdehyde dehydrogenase</fullName>
    </alternativeName>
    <alternativeName>
        <fullName evidence="1">Glutamyl-gamma-semialdehyde dehydrogenase</fullName>
        <shortName evidence="1">GSA dehydrogenase</shortName>
    </alternativeName>
</protein>
<gene>
    <name evidence="1" type="primary">proA</name>
    <name type="ordered locus">VC_2273</name>
</gene>
<proteinExistence type="inferred from homology"/>
<sequence>MDLTVLGKAAKAASFQLATASTAQKNQALASMADQLEAQSASILAANAKDIALGREAGLSDAMLDRLLLNESRLQAIANDVRNVIKLNDPVGSEIDSRVLENGMSLARRRVPLGVVGVIYEARPNVTIDIAALCLKTGNAAILRGGKETFFSNMELVKVIQSALDKAGLPAASVQYIEKPDRELVTQLLKMDDYVDMIIPRGGAGLHKMCKENSTVPVIIGGFGISHIFVDESADLDKSVAVIENAKVQRPSACNALDTLLVHQAIAKPLLDKLIAKLNGKVAFVAEPKAKALMSSAAELRDAQAGDFDTEWLSYTLGVKVVQDVQEAIEHMREHNASHSDAIMTNDLYNAELFVNTAGSAAVYVNASTRFTDGAQFGLGAEVAVSTQKLHARGPMGLEELTSYKWVGKANYLSRS</sequence>
<comment type="function">
    <text evidence="1">Catalyzes the NADPH-dependent reduction of L-glutamate 5-phosphate into L-glutamate 5-semialdehyde and phosphate. The product spontaneously undergoes cyclization to form 1-pyrroline-5-carboxylate.</text>
</comment>
<comment type="catalytic activity">
    <reaction evidence="1">
        <text>L-glutamate 5-semialdehyde + phosphate + NADP(+) = L-glutamyl 5-phosphate + NADPH + H(+)</text>
        <dbReference type="Rhea" id="RHEA:19541"/>
        <dbReference type="ChEBI" id="CHEBI:15378"/>
        <dbReference type="ChEBI" id="CHEBI:43474"/>
        <dbReference type="ChEBI" id="CHEBI:57783"/>
        <dbReference type="ChEBI" id="CHEBI:58066"/>
        <dbReference type="ChEBI" id="CHEBI:58274"/>
        <dbReference type="ChEBI" id="CHEBI:58349"/>
        <dbReference type="EC" id="1.2.1.41"/>
    </reaction>
</comment>
<comment type="pathway">
    <text evidence="1">Amino-acid biosynthesis; L-proline biosynthesis; L-glutamate 5-semialdehyde from L-glutamate: step 2/2.</text>
</comment>
<comment type="subcellular location">
    <subcellularLocation>
        <location evidence="1">Cytoplasm</location>
    </subcellularLocation>
</comment>
<comment type="similarity">
    <text evidence="1">Belongs to the gamma-glutamyl phosphate reductase family.</text>
</comment>
<comment type="sequence caution" evidence="2">
    <conflict type="erroneous initiation">
        <sequence resource="EMBL-CDS" id="AAF95417"/>
    </conflict>
</comment>